<sequence>MSMFLDTAKVSVKAGRGGDGMVAFRREKYVANGGPWGGDGGRGGDVIFVVNEGLRTLMDFRYNRHFKAKAGEKGMTKGMHGRGAENLYVSVPQGTTVRDAQTGKVIADLVKNGQEFIVAHGGRGGRGNIRFATPRNPAPEISENGEPGEERELALELKILADVGLVGFPSVGKSTLLSVITAAKPKIGAYHFTTIVPNLGMVRTKSGDSFAVADLPGLIEGASQGVGLGTQFLRHIERTRVILHVIDMSASEGRDPYEDYLAINKELETYNLRLLERPQIIVANKMDMPQAAENLEQFKEKLDANYGEFDDKPQIFPISGIAHQGLDALLDATAQLLAQTDDFLLYDESDMQEEAYYGFEEEEKAFDISRADDAAWVLSGEKLEKLFVMTNMERDEAIMKFSRQLRGMGVDQALRERGAKDGDIVRIGKFEFEFVD</sequence>
<dbReference type="EC" id="3.6.5.-" evidence="1"/>
<dbReference type="EMBL" id="AE014133">
    <property type="protein sequence ID" value="AAN58519.1"/>
    <property type="molecule type" value="Genomic_DNA"/>
</dbReference>
<dbReference type="RefSeq" id="NP_721213.3">
    <property type="nucleotide sequence ID" value="NC_004350.2"/>
</dbReference>
<dbReference type="SMR" id="Q8DUU2"/>
<dbReference type="STRING" id="210007.SMU_801"/>
<dbReference type="KEGG" id="smu:SMU_801"/>
<dbReference type="PATRIC" id="fig|210007.7.peg.710"/>
<dbReference type="eggNOG" id="COG0536">
    <property type="taxonomic scope" value="Bacteria"/>
</dbReference>
<dbReference type="HOGENOM" id="CLU_011747_2_1_9"/>
<dbReference type="OrthoDB" id="9807318at2"/>
<dbReference type="Proteomes" id="UP000002512">
    <property type="component" value="Chromosome"/>
</dbReference>
<dbReference type="GO" id="GO:0005737">
    <property type="term" value="C:cytoplasm"/>
    <property type="evidence" value="ECO:0007669"/>
    <property type="project" value="UniProtKB-SubCell"/>
</dbReference>
<dbReference type="GO" id="GO:0005525">
    <property type="term" value="F:GTP binding"/>
    <property type="evidence" value="ECO:0007669"/>
    <property type="project" value="UniProtKB-UniRule"/>
</dbReference>
<dbReference type="GO" id="GO:0003924">
    <property type="term" value="F:GTPase activity"/>
    <property type="evidence" value="ECO:0007669"/>
    <property type="project" value="UniProtKB-UniRule"/>
</dbReference>
<dbReference type="GO" id="GO:0000287">
    <property type="term" value="F:magnesium ion binding"/>
    <property type="evidence" value="ECO:0007669"/>
    <property type="project" value="InterPro"/>
</dbReference>
<dbReference type="GO" id="GO:0042254">
    <property type="term" value="P:ribosome biogenesis"/>
    <property type="evidence" value="ECO:0007669"/>
    <property type="project" value="UniProtKB-UniRule"/>
</dbReference>
<dbReference type="CDD" id="cd01898">
    <property type="entry name" value="Obg"/>
    <property type="match status" value="1"/>
</dbReference>
<dbReference type="FunFam" id="2.70.210.12:FF:000001">
    <property type="entry name" value="GTPase Obg"/>
    <property type="match status" value="1"/>
</dbReference>
<dbReference type="Gene3D" id="3.30.300.350">
    <property type="entry name" value="GTP-binding protein OBG, C-terminal domain"/>
    <property type="match status" value="1"/>
</dbReference>
<dbReference type="Gene3D" id="2.70.210.12">
    <property type="entry name" value="GTP1/OBG domain"/>
    <property type="match status" value="1"/>
</dbReference>
<dbReference type="Gene3D" id="3.40.50.300">
    <property type="entry name" value="P-loop containing nucleotide triphosphate hydrolases"/>
    <property type="match status" value="1"/>
</dbReference>
<dbReference type="HAMAP" id="MF_01454">
    <property type="entry name" value="GTPase_Obg"/>
    <property type="match status" value="1"/>
</dbReference>
<dbReference type="InterPro" id="IPR031167">
    <property type="entry name" value="G_OBG"/>
</dbReference>
<dbReference type="InterPro" id="IPR006073">
    <property type="entry name" value="GTP-bd"/>
</dbReference>
<dbReference type="InterPro" id="IPR014100">
    <property type="entry name" value="GTP-bd_Obg/CgtA"/>
</dbReference>
<dbReference type="InterPro" id="IPR036346">
    <property type="entry name" value="GTP-bd_prot_GTP1/OBG_C_sf"/>
</dbReference>
<dbReference type="InterPro" id="IPR006074">
    <property type="entry name" value="GTP1-OBG_CS"/>
</dbReference>
<dbReference type="InterPro" id="IPR006169">
    <property type="entry name" value="GTP1_OBG_dom"/>
</dbReference>
<dbReference type="InterPro" id="IPR036726">
    <property type="entry name" value="GTP1_OBG_dom_sf"/>
</dbReference>
<dbReference type="InterPro" id="IPR045086">
    <property type="entry name" value="OBG_GTPase"/>
</dbReference>
<dbReference type="InterPro" id="IPR015349">
    <property type="entry name" value="OCT_dom"/>
</dbReference>
<dbReference type="InterPro" id="IPR027417">
    <property type="entry name" value="P-loop_NTPase"/>
</dbReference>
<dbReference type="InterPro" id="IPR005225">
    <property type="entry name" value="Small_GTP-bd"/>
</dbReference>
<dbReference type="NCBIfam" id="TIGR02729">
    <property type="entry name" value="Obg_CgtA"/>
    <property type="match status" value="1"/>
</dbReference>
<dbReference type="NCBIfam" id="TIGR03595">
    <property type="entry name" value="Obg_CgtA_exten"/>
    <property type="match status" value="1"/>
</dbReference>
<dbReference type="NCBIfam" id="NF008954">
    <property type="entry name" value="PRK12296.1"/>
    <property type="match status" value="1"/>
</dbReference>
<dbReference type="NCBIfam" id="NF008955">
    <property type="entry name" value="PRK12297.1"/>
    <property type="match status" value="1"/>
</dbReference>
<dbReference type="NCBIfam" id="NF008956">
    <property type="entry name" value="PRK12299.1"/>
    <property type="match status" value="1"/>
</dbReference>
<dbReference type="NCBIfam" id="TIGR00231">
    <property type="entry name" value="small_GTP"/>
    <property type="match status" value="1"/>
</dbReference>
<dbReference type="PANTHER" id="PTHR11702">
    <property type="entry name" value="DEVELOPMENTALLY REGULATED GTP-BINDING PROTEIN-RELATED"/>
    <property type="match status" value="1"/>
</dbReference>
<dbReference type="PANTHER" id="PTHR11702:SF31">
    <property type="entry name" value="MITOCHONDRIAL RIBOSOME-ASSOCIATED GTPASE 2"/>
    <property type="match status" value="1"/>
</dbReference>
<dbReference type="Pfam" id="PF09269">
    <property type="entry name" value="DUF1967"/>
    <property type="match status" value="1"/>
</dbReference>
<dbReference type="Pfam" id="PF01018">
    <property type="entry name" value="GTP1_OBG"/>
    <property type="match status" value="1"/>
</dbReference>
<dbReference type="Pfam" id="PF01926">
    <property type="entry name" value="MMR_HSR1"/>
    <property type="match status" value="1"/>
</dbReference>
<dbReference type="PIRSF" id="PIRSF002401">
    <property type="entry name" value="GTP_bd_Obg/CgtA"/>
    <property type="match status" value="1"/>
</dbReference>
<dbReference type="PRINTS" id="PR00326">
    <property type="entry name" value="GTP1OBG"/>
</dbReference>
<dbReference type="SUPFAM" id="SSF102741">
    <property type="entry name" value="Obg GTP-binding protein C-terminal domain"/>
    <property type="match status" value="1"/>
</dbReference>
<dbReference type="SUPFAM" id="SSF82051">
    <property type="entry name" value="Obg GTP-binding protein N-terminal domain"/>
    <property type="match status" value="1"/>
</dbReference>
<dbReference type="SUPFAM" id="SSF52540">
    <property type="entry name" value="P-loop containing nucleoside triphosphate hydrolases"/>
    <property type="match status" value="1"/>
</dbReference>
<dbReference type="PROSITE" id="PS51710">
    <property type="entry name" value="G_OBG"/>
    <property type="match status" value="1"/>
</dbReference>
<dbReference type="PROSITE" id="PS00905">
    <property type="entry name" value="GTP1_OBG"/>
    <property type="match status" value="1"/>
</dbReference>
<dbReference type="PROSITE" id="PS51883">
    <property type="entry name" value="OBG"/>
    <property type="match status" value="1"/>
</dbReference>
<dbReference type="PROSITE" id="PS51881">
    <property type="entry name" value="OCT"/>
    <property type="match status" value="1"/>
</dbReference>
<comment type="function">
    <text evidence="1">An essential GTPase which binds GTP, GDP and possibly (p)ppGpp with moderate affinity, with high nucleotide exchange rates and a fairly low GTP hydrolysis rate. Plays a role in control of the cell cycle, stress response, ribosome biogenesis and in those bacteria that undergo differentiation, in morphogenesis control.</text>
</comment>
<comment type="cofactor">
    <cofactor evidence="1">
        <name>Mg(2+)</name>
        <dbReference type="ChEBI" id="CHEBI:18420"/>
    </cofactor>
</comment>
<comment type="subunit">
    <text evidence="1">Monomer.</text>
</comment>
<comment type="subcellular location">
    <subcellularLocation>
        <location evidence="1">Cytoplasm</location>
    </subcellularLocation>
</comment>
<comment type="similarity">
    <text evidence="1">Belongs to the TRAFAC class OBG-HflX-like GTPase superfamily. OBG GTPase family.</text>
</comment>
<accession>Q8DUU2</accession>
<protein>
    <recommendedName>
        <fullName evidence="1">GTPase Obg</fullName>
        <ecNumber evidence="1">3.6.5.-</ecNumber>
    </recommendedName>
    <alternativeName>
        <fullName evidence="1">GTP-binding protein Obg</fullName>
    </alternativeName>
</protein>
<keyword id="KW-0963">Cytoplasm</keyword>
<keyword id="KW-0342">GTP-binding</keyword>
<keyword id="KW-0378">Hydrolase</keyword>
<keyword id="KW-0460">Magnesium</keyword>
<keyword id="KW-0479">Metal-binding</keyword>
<keyword id="KW-0547">Nucleotide-binding</keyword>
<keyword id="KW-1185">Reference proteome</keyword>
<reference key="1">
    <citation type="journal article" date="2002" name="Proc. Natl. Acad. Sci. U.S.A.">
        <title>Genome sequence of Streptococcus mutans UA159, a cariogenic dental pathogen.</title>
        <authorList>
            <person name="Ajdic D.J."/>
            <person name="McShan W.M."/>
            <person name="McLaughlin R.E."/>
            <person name="Savic G."/>
            <person name="Chang J."/>
            <person name="Carson M.B."/>
            <person name="Primeaux C."/>
            <person name="Tian R."/>
            <person name="Kenton S."/>
            <person name="Jia H.G."/>
            <person name="Lin S.P."/>
            <person name="Qian Y."/>
            <person name="Li S."/>
            <person name="Zhu H."/>
            <person name="Najar F.Z."/>
            <person name="Lai H."/>
            <person name="White J."/>
            <person name="Roe B.A."/>
            <person name="Ferretti J.J."/>
        </authorList>
    </citation>
    <scope>NUCLEOTIDE SEQUENCE [LARGE SCALE GENOMIC DNA]</scope>
    <source>
        <strain>ATCC 700610 / UA159</strain>
    </source>
</reference>
<name>OBG_STRMU</name>
<proteinExistence type="inferred from homology"/>
<gene>
    <name evidence="1" type="primary">obg</name>
    <name type="ordered locus">SMU_801</name>
</gene>
<feature type="chain" id="PRO_0000386296" description="GTPase Obg">
    <location>
        <begin position="1"/>
        <end position="436"/>
    </location>
</feature>
<feature type="domain" description="Obg" evidence="3">
    <location>
        <begin position="2"/>
        <end position="160"/>
    </location>
</feature>
<feature type="domain" description="OBG-type G" evidence="1">
    <location>
        <begin position="161"/>
        <end position="338"/>
    </location>
</feature>
<feature type="domain" description="OCT" evidence="2">
    <location>
        <begin position="358"/>
        <end position="436"/>
    </location>
</feature>
<feature type="binding site" evidence="1">
    <location>
        <begin position="167"/>
        <end position="174"/>
    </location>
    <ligand>
        <name>GTP</name>
        <dbReference type="ChEBI" id="CHEBI:37565"/>
    </ligand>
</feature>
<feature type="binding site" evidence="1">
    <location>
        <position position="174"/>
    </location>
    <ligand>
        <name>Mg(2+)</name>
        <dbReference type="ChEBI" id="CHEBI:18420"/>
    </ligand>
</feature>
<feature type="binding site" evidence="1">
    <location>
        <begin position="192"/>
        <end position="196"/>
    </location>
    <ligand>
        <name>GTP</name>
        <dbReference type="ChEBI" id="CHEBI:37565"/>
    </ligand>
</feature>
<feature type="binding site" evidence="1">
    <location>
        <position position="194"/>
    </location>
    <ligand>
        <name>Mg(2+)</name>
        <dbReference type="ChEBI" id="CHEBI:18420"/>
    </ligand>
</feature>
<feature type="binding site" evidence="1">
    <location>
        <begin position="214"/>
        <end position="217"/>
    </location>
    <ligand>
        <name>GTP</name>
        <dbReference type="ChEBI" id="CHEBI:37565"/>
    </ligand>
</feature>
<feature type="binding site" evidence="1">
    <location>
        <begin position="284"/>
        <end position="287"/>
    </location>
    <ligand>
        <name>GTP</name>
        <dbReference type="ChEBI" id="CHEBI:37565"/>
    </ligand>
</feature>
<feature type="binding site" evidence="1">
    <location>
        <begin position="319"/>
        <end position="321"/>
    </location>
    <ligand>
        <name>GTP</name>
        <dbReference type="ChEBI" id="CHEBI:37565"/>
    </ligand>
</feature>
<organism>
    <name type="scientific">Streptococcus mutans serotype c (strain ATCC 700610 / UA159)</name>
    <dbReference type="NCBI Taxonomy" id="210007"/>
    <lineage>
        <taxon>Bacteria</taxon>
        <taxon>Bacillati</taxon>
        <taxon>Bacillota</taxon>
        <taxon>Bacilli</taxon>
        <taxon>Lactobacillales</taxon>
        <taxon>Streptococcaceae</taxon>
        <taxon>Streptococcus</taxon>
    </lineage>
</organism>
<evidence type="ECO:0000255" key="1">
    <source>
        <dbReference type="HAMAP-Rule" id="MF_01454"/>
    </source>
</evidence>
<evidence type="ECO:0000255" key="2">
    <source>
        <dbReference type="PROSITE-ProRule" id="PRU01229"/>
    </source>
</evidence>
<evidence type="ECO:0000255" key="3">
    <source>
        <dbReference type="PROSITE-ProRule" id="PRU01231"/>
    </source>
</evidence>